<evidence type="ECO:0000255" key="1">
    <source>
        <dbReference type="HAMAP-Rule" id="MF_00119"/>
    </source>
</evidence>
<protein>
    <recommendedName>
        <fullName evidence="1">Translation initiation factor 2 subunit gamma</fullName>
        <ecNumber evidence="1">3.6.5.3</ecNumber>
    </recommendedName>
    <alternativeName>
        <fullName evidence="1">aIF2-gamma</fullName>
    </alternativeName>
    <alternativeName>
        <fullName evidence="1">eIF-2-gamma</fullName>
    </alternativeName>
</protein>
<reference key="1">
    <citation type="submission" date="2007-06" db="EMBL/GenBank/DDBJ databases">
        <title>Complete sequence of Methanococcus aeolicus Nankai-3.</title>
        <authorList>
            <consortium name="US DOE Joint Genome Institute"/>
            <person name="Copeland A."/>
            <person name="Lucas S."/>
            <person name="Lapidus A."/>
            <person name="Barry K."/>
            <person name="Glavina del Rio T."/>
            <person name="Dalin E."/>
            <person name="Tice H."/>
            <person name="Pitluck S."/>
            <person name="Chain P."/>
            <person name="Malfatti S."/>
            <person name="Shin M."/>
            <person name="Vergez L."/>
            <person name="Schmutz J."/>
            <person name="Larimer F."/>
            <person name="Land M."/>
            <person name="Hauser L."/>
            <person name="Kyrpides N."/>
            <person name="Lykidis A."/>
            <person name="Sieprawska-Lupa M."/>
            <person name="Whitman W.B."/>
            <person name="Richardson P."/>
        </authorList>
    </citation>
    <scope>NUCLEOTIDE SEQUENCE [LARGE SCALE GENOMIC DNA]</scope>
    <source>
        <strain>ATCC BAA-1280 / DSM 17508 / OCM 812 / Nankai-3</strain>
    </source>
</reference>
<feature type="chain" id="PRO_1000015788" description="Translation initiation factor 2 subunit gamma">
    <location>
        <begin position="1"/>
        <end position="410"/>
    </location>
</feature>
<feature type="domain" description="tr-type G" evidence="1">
    <location>
        <begin position="6"/>
        <end position="203"/>
    </location>
</feature>
<feature type="region of interest" description="G1" evidence="1">
    <location>
        <begin position="15"/>
        <end position="22"/>
    </location>
</feature>
<feature type="region of interest" description="G2" evidence="1">
    <location>
        <begin position="43"/>
        <end position="47"/>
    </location>
</feature>
<feature type="region of interest" description="G3" evidence="1">
    <location>
        <begin position="90"/>
        <end position="93"/>
    </location>
</feature>
<feature type="region of interest" description="G4" evidence="1">
    <location>
        <begin position="146"/>
        <end position="149"/>
    </location>
</feature>
<feature type="region of interest" description="G5" evidence="1">
    <location>
        <begin position="181"/>
        <end position="183"/>
    </location>
</feature>
<feature type="binding site" evidence="1">
    <location>
        <begin position="18"/>
        <end position="23"/>
    </location>
    <ligand>
        <name>GTP</name>
        <dbReference type="ChEBI" id="CHEBI:37565"/>
    </ligand>
</feature>
<feature type="binding site" evidence="1">
    <location>
        <position position="18"/>
    </location>
    <ligand>
        <name>Mg(2+)</name>
        <dbReference type="ChEBI" id="CHEBI:18420"/>
        <label>2</label>
    </ligand>
</feature>
<feature type="binding site" evidence="1">
    <location>
        <position position="22"/>
    </location>
    <ligand>
        <name>Mg(2+)</name>
        <dbReference type="ChEBI" id="CHEBI:18420"/>
        <label>1</label>
    </ligand>
</feature>
<feature type="binding site" evidence="1">
    <location>
        <position position="43"/>
    </location>
    <ligand>
        <name>Mg(2+)</name>
        <dbReference type="ChEBI" id="CHEBI:18420"/>
        <label>2</label>
    </ligand>
</feature>
<feature type="binding site" evidence="1">
    <location>
        <position position="45"/>
    </location>
    <ligand>
        <name>Mg(2+)</name>
        <dbReference type="ChEBI" id="CHEBI:18420"/>
        <label>1</label>
    </ligand>
</feature>
<feature type="binding site" evidence="1">
    <location>
        <position position="58"/>
    </location>
    <ligand>
        <name>Zn(2+)</name>
        <dbReference type="ChEBI" id="CHEBI:29105"/>
    </ligand>
</feature>
<feature type="binding site" evidence="1">
    <location>
        <position position="61"/>
    </location>
    <ligand>
        <name>Zn(2+)</name>
        <dbReference type="ChEBI" id="CHEBI:29105"/>
    </ligand>
</feature>
<feature type="binding site" evidence="1">
    <location>
        <position position="73"/>
    </location>
    <ligand>
        <name>Zn(2+)</name>
        <dbReference type="ChEBI" id="CHEBI:29105"/>
    </ligand>
</feature>
<feature type="binding site" evidence="1">
    <location>
        <position position="76"/>
    </location>
    <ligand>
        <name>Zn(2+)</name>
        <dbReference type="ChEBI" id="CHEBI:29105"/>
    </ligand>
</feature>
<feature type="binding site" evidence="1">
    <location>
        <begin position="146"/>
        <end position="149"/>
    </location>
    <ligand>
        <name>GTP</name>
        <dbReference type="ChEBI" id="CHEBI:37565"/>
    </ligand>
</feature>
<feature type="binding site" evidence="1">
    <location>
        <begin position="181"/>
        <end position="183"/>
    </location>
    <ligand>
        <name>GTP</name>
        <dbReference type="ChEBI" id="CHEBI:37565"/>
    </ligand>
</feature>
<keyword id="KW-0342">GTP-binding</keyword>
<keyword id="KW-0378">Hydrolase</keyword>
<keyword id="KW-0396">Initiation factor</keyword>
<keyword id="KW-0460">Magnesium</keyword>
<keyword id="KW-0479">Metal-binding</keyword>
<keyword id="KW-0547">Nucleotide-binding</keyword>
<keyword id="KW-0648">Protein biosynthesis</keyword>
<keyword id="KW-0862">Zinc</keyword>
<organism>
    <name type="scientific">Methanococcus aeolicus (strain ATCC BAA-1280 / DSM 17508 / OCM 812 / Nankai-3)</name>
    <dbReference type="NCBI Taxonomy" id="419665"/>
    <lineage>
        <taxon>Archaea</taxon>
        <taxon>Methanobacteriati</taxon>
        <taxon>Methanobacteriota</taxon>
        <taxon>Methanomada group</taxon>
        <taxon>Methanococci</taxon>
        <taxon>Methanococcales</taxon>
        <taxon>Methanococcaceae</taxon>
        <taxon>Methanococcus</taxon>
    </lineage>
</organism>
<name>IF2G_META3</name>
<comment type="function">
    <text evidence="1">eIF-2 functions in the early steps of protein synthesis by forming a ternary complex with GTP and initiator tRNA.</text>
</comment>
<comment type="catalytic activity">
    <reaction evidence="1">
        <text>GTP + H2O = GDP + phosphate + H(+)</text>
        <dbReference type="Rhea" id="RHEA:19669"/>
        <dbReference type="ChEBI" id="CHEBI:15377"/>
        <dbReference type="ChEBI" id="CHEBI:15378"/>
        <dbReference type="ChEBI" id="CHEBI:37565"/>
        <dbReference type="ChEBI" id="CHEBI:43474"/>
        <dbReference type="ChEBI" id="CHEBI:58189"/>
        <dbReference type="EC" id="3.6.5.3"/>
    </reaction>
</comment>
<comment type="cofactor">
    <cofactor evidence="1">
        <name>Mg(2+)</name>
        <dbReference type="ChEBI" id="CHEBI:18420"/>
    </cofactor>
</comment>
<comment type="subunit">
    <text evidence="1">Heterotrimer composed of an alpha, a beta and a gamma chain.</text>
</comment>
<comment type="similarity">
    <text evidence="1">Belongs to the TRAFAC class translation factor GTPase superfamily. Classic translation factor GTPase family. EIF2G subfamily.</text>
</comment>
<gene>
    <name evidence="1" type="primary">eif2g</name>
    <name type="ordered locus">Maeo_0246</name>
</gene>
<proteinExistence type="inferred from homology"/>
<sequence>MVKVKQSEINIGMVGHVDHGKTSLTRQLTGTWTDTHSEELKRGISIRLGYADCEIMKCPKCGAPEAYSVSKTCPVCGTKTKMSRKISFVDAPGHETLMATMLSGASLMNGAILVIAATEKCPQPQTKEHLMALDALGIENIIIVQNKIDLVDEERAKESYNEIKEFVKDTVAEKAPIIPISAHHGANIDILLNAIEDLMPTPEMDEGAPARLYVARSFDINKPGCEISKLKGGVIGGSIIQGTLNSGEKIEIKPGLKIVEGNKIRWESIITKITSLGVGGKTVKVAHPGGLVGIGTELDPALTKSDSLSGCVAGAPGTLPETLSEITVQTKLLDRIVGSDEELIISPLKSNEALMLNVGTATTVGIITSARGDMADMKLKLPICADKGDRIAMSRRIGSRWRLIGYGIIQ</sequence>
<accession>A6UTL4</accession>
<dbReference type="EC" id="3.6.5.3" evidence="1"/>
<dbReference type="EMBL" id="CP000743">
    <property type="protein sequence ID" value="ABR55836.1"/>
    <property type="molecule type" value="Genomic_DNA"/>
</dbReference>
<dbReference type="RefSeq" id="WP_011972968.1">
    <property type="nucleotide sequence ID" value="NC_009635.1"/>
</dbReference>
<dbReference type="SMR" id="A6UTL4"/>
<dbReference type="STRING" id="419665.Maeo_0246"/>
<dbReference type="GeneID" id="5327768"/>
<dbReference type="KEGG" id="mae:Maeo_0246"/>
<dbReference type="eggNOG" id="arCOG01563">
    <property type="taxonomic scope" value="Archaea"/>
</dbReference>
<dbReference type="HOGENOM" id="CLU_027154_0_1_2"/>
<dbReference type="OrthoDB" id="7798at2157"/>
<dbReference type="Proteomes" id="UP000001106">
    <property type="component" value="Chromosome"/>
</dbReference>
<dbReference type="GO" id="GO:0005829">
    <property type="term" value="C:cytosol"/>
    <property type="evidence" value="ECO:0007669"/>
    <property type="project" value="TreeGrafter"/>
</dbReference>
<dbReference type="GO" id="GO:0005525">
    <property type="term" value="F:GTP binding"/>
    <property type="evidence" value="ECO:0007669"/>
    <property type="project" value="UniProtKB-UniRule"/>
</dbReference>
<dbReference type="GO" id="GO:0003924">
    <property type="term" value="F:GTPase activity"/>
    <property type="evidence" value="ECO:0007669"/>
    <property type="project" value="InterPro"/>
</dbReference>
<dbReference type="GO" id="GO:0046872">
    <property type="term" value="F:metal ion binding"/>
    <property type="evidence" value="ECO:0007669"/>
    <property type="project" value="UniProtKB-KW"/>
</dbReference>
<dbReference type="GO" id="GO:0003746">
    <property type="term" value="F:translation elongation factor activity"/>
    <property type="evidence" value="ECO:0007669"/>
    <property type="project" value="UniProtKB-UniRule"/>
</dbReference>
<dbReference type="GO" id="GO:0003743">
    <property type="term" value="F:translation initiation factor activity"/>
    <property type="evidence" value="ECO:0007669"/>
    <property type="project" value="UniProtKB-KW"/>
</dbReference>
<dbReference type="GO" id="GO:0000049">
    <property type="term" value="F:tRNA binding"/>
    <property type="evidence" value="ECO:0007669"/>
    <property type="project" value="InterPro"/>
</dbReference>
<dbReference type="GO" id="GO:0001731">
    <property type="term" value="P:formation of translation preinitiation complex"/>
    <property type="evidence" value="ECO:0007669"/>
    <property type="project" value="TreeGrafter"/>
</dbReference>
<dbReference type="CDD" id="cd01888">
    <property type="entry name" value="eIF2_gamma"/>
    <property type="match status" value="1"/>
</dbReference>
<dbReference type="CDD" id="cd03688">
    <property type="entry name" value="eIF2_gamma_II"/>
    <property type="match status" value="1"/>
</dbReference>
<dbReference type="CDD" id="cd15490">
    <property type="entry name" value="eIF2_gamma_III"/>
    <property type="match status" value="1"/>
</dbReference>
<dbReference type="FunFam" id="2.40.30.10:FF:000009">
    <property type="entry name" value="Eukaryotic translation initiation factor 2 subunit gamma"/>
    <property type="match status" value="1"/>
</dbReference>
<dbReference type="FunFam" id="3.40.50.300:FF:000065">
    <property type="entry name" value="Eukaryotic translation initiation factor 2 subunit gamma"/>
    <property type="match status" value="1"/>
</dbReference>
<dbReference type="FunFam" id="2.40.30.10:FF:000075">
    <property type="entry name" value="Translation initiation factor 2 subunit gamma"/>
    <property type="match status" value="1"/>
</dbReference>
<dbReference type="Gene3D" id="3.40.50.300">
    <property type="entry name" value="P-loop containing nucleotide triphosphate hydrolases"/>
    <property type="match status" value="1"/>
</dbReference>
<dbReference type="Gene3D" id="2.40.30.10">
    <property type="entry name" value="Translation factors"/>
    <property type="match status" value="2"/>
</dbReference>
<dbReference type="HAMAP" id="MF_00119">
    <property type="entry name" value="eIF_2_gamma"/>
    <property type="match status" value="1"/>
</dbReference>
<dbReference type="InterPro" id="IPR050543">
    <property type="entry name" value="eIF2G"/>
</dbReference>
<dbReference type="InterPro" id="IPR015256">
    <property type="entry name" value="eIF2g_C"/>
</dbReference>
<dbReference type="InterPro" id="IPR044127">
    <property type="entry name" value="eIF2g_dom_2"/>
</dbReference>
<dbReference type="InterPro" id="IPR044128">
    <property type="entry name" value="eIF2g_GTP-bd"/>
</dbReference>
<dbReference type="InterPro" id="IPR027417">
    <property type="entry name" value="P-loop_NTPase"/>
</dbReference>
<dbReference type="InterPro" id="IPR005225">
    <property type="entry name" value="Small_GTP-bd"/>
</dbReference>
<dbReference type="InterPro" id="IPR000795">
    <property type="entry name" value="T_Tr_GTP-bd_dom"/>
</dbReference>
<dbReference type="InterPro" id="IPR022424">
    <property type="entry name" value="TIF2_gsu"/>
</dbReference>
<dbReference type="InterPro" id="IPR009000">
    <property type="entry name" value="Transl_B-barrel_sf"/>
</dbReference>
<dbReference type="InterPro" id="IPR009001">
    <property type="entry name" value="Transl_elong_EF1A/Init_IF2_C"/>
</dbReference>
<dbReference type="NCBIfam" id="TIGR03680">
    <property type="entry name" value="eif2g_arch"/>
    <property type="match status" value="1"/>
</dbReference>
<dbReference type="NCBIfam" id="NF003077">
    <property type="entry name" value="PRK04000.1"/>
    <property type="match status" value="1"/>
</dbReference>
<dbReference type="NCBIfam" id="TIGR00231">
    <property type="entry name" value="small_GTP"/>
    <property type="match status" value="1"/>
</dbReference>
<dbReference type="PANTHER" id="PTHR42854">
    <property type="entry name" value="EUKARYOTIC TRANSLATION INITIATION FACTOR 2 SUBUNIT 3 FAMILY MEMBER"/>
    <property type="match status" value="1"/>
</dbReference>
<dbReference type="PANTHER" id="PTHR42854:SF3">
    <property type="entry name" value="EUKARYOTIC TRANSLATION INITIATION FACTOR 2 SUBUNIT 3-RELATED"/>
    <property type="match status" value="1"/>
</dbReference>
<dbReference type="Pfam" id="PF09173">
    <property type="entry name" value="eIF2_C"/>
    <property type="match status" value="1"/>
</dbReference>
<dbReference type="Pfam" id="PF00009">
    <property type="entry name" value="GTP_EFTU"/>
    <property type="match status" value="1"/>
</dbReference>
<dbReference type="PRINTS" id="PR00315">
    <property type="entry name" value="ELONGATNFCT"/>
</dbReference>
<dbReference type="SUPFAM" id="SSF50465">
    <property type="entry name" value="EF-Tu/eEF-1alpha/eIF2-gamma C-terminal domain"/>
    <property type="match status" value="1"/>
</dbReference>
<dbReference type="SUPFAM" id="SSF52540">
    <property type="entry name" value="P-loop containing nucleoside triphosphate hydrolases"/>
    <property type="match status" value="1"/>
</dbReference>
<dbReference type="SUPFAM" id="SSF50447">
    <property type="entry name" value="Translation proteins"/>
    <property type="match status" value="1"/>
</dbReference>
<dbReference type="PROSITE" id="PS51722">
    <property type="entry name" value="G_TR_2"/>
    <property type="match status" value="1"/>
</dbReference>